<gene>
    <name type="primary">Slc1a1</name>
    <name evidence="11" type="synonym">Eaac1</name>
    <name type="synonym">Eaat3</name>
</gene>
<feature type="chain" id="PRO_0000202066" description="Excitatory amino acid transporter 3">
    <location>
        <begin position="1"/>
        <end position="523"/>
    </location>
</feature>
<feature type="topological domain" description="Cytoplasmic" evidence="12">
    <location>
        <begin position="1"/>
        <end position="18"/>
    </location>
</feature>
<feature type="transmembrane region" description="Helical" evidence="4">
    <location>
        <begin position="19"/>
        <end position="38"/>
    </location>
</feature>
<feature type="topological domain" description="Extracellular" evidence="12">
    <location>
        <begin position="39"/>
        <end position="61"/>
    </location>
</feature>
<feature type="transmembrane region" description="Helical" evidence="4">
    <location>
        <begin position="62"/>
        <end position="82"/>
    </location>
</feature>
<feature type="topological domain" description="Cytoplasmic" evidence="12">
    <location>
        <begin position="83"/>
        <end position="93"/>
    </location>
</feature>
<feature type="transmembrane region" description="Helical" evidence="4">
    <location>
        <begin position="94"/>
        <end position="114"/>
    </location>
</feature>
<feature type="topological domain" description="Extracellular" evidence="12">
    <location>
        <begin position="115"/>
        <end position="204"/>
    </location>
</feature>
<feature type="transmembrane region" description="Helical; Name=4" evidence="1">
    <location>
        <begin position="205"/>
        <end position="228"/>
    </location>
</feature>
<feature type="topological domain" description="Cytoplasmic" evidence="12">
    <location>
        <begin position="229"/>
        <end position="237"/>
    </location>
</feature>
<feature type="transmembrane region" description="Helical; Name=5" evidence="1">
    <location>
        <begin position="238"/>
        <end position="265"/>
    </location>
</feature>
<feature type="topological domain" description="Extracellular" evidence="12">
    <location>
        <begin position="266"/>
        <end position="285"/>
    </location>
</feature>
<feature type="transmembrane region" description="Helical; Name=6" evidence="1">
    <location>
        <begin position="286"/>
        <end position="307"/>
    </location>
</feature>
<feature type="topological domain" description="Cytoplasmic" evidence="12">
    <location>
        <begin position="308"/>
        <end position="312"/>
    </location>
</feature>
<feature type="intramembrane region" description="Discontinuously helical" evidence="1">
    <location>
        <begin position="313"/>
        <end position="343"/>
    </location>
</feature>
<feature type="topological domain" description="Cytoplasmic" evidence="12">
    <location>
        <begin position="344"/>
        <end position="352"/>
    </location>
</feature>
<feature type="transmembrane region" description="Helical; Name=7" evidence="1">
    <location>
        <begin position="353"/>
        <end position="379"/>
    </location>
</feature>
<feature type="topological domain" description="Extracellular" evidence="12">
    <location>
        <begin position="380"/>
        <end position="392"/>
    </location>
</feature>
<feature type="intramembrane region" description="Discontinuously helical" evidence="1">
    <location>
        <begin position="393"/>
        <end position="426"/>
    </location>
</feature>
<feature type="topological domain" description="Extracellular" evidence="12">
    <location>
        <begin position="427"/>
        <end position="439"/>
    </location>
</feature>
<feature type="transmembrane region" description="Helical; Name=8" evidence="1">
    <location>
        <begin position="440"/>
        <end position="461"/>
    </location>
</feature>
<feature type="topological domain" description="Cytoplasmic" evidence="12">
    <location>
        <begin position="462"/>
        <end position="523"/>
    </location>
</feature>
<feature type="binding site" evidence="2">
    <location>
        <position position="98"/>
    </location>
    <ligand>
        <name>Na(+)</name>
        <dbReference type="ChEBI" id="CHEBI:29101"/>
        <label>1</label>
    </ligand>
</feature>
<feature type="binding site" evidence="2">
    <location>
        <position position="101"/>
    </location>
    <ligand>
        <name>Na(+)</name>
        <dbReference type="ChEBI" id="CHEBI:29101"/>
        <label>1</label>
    </ligand>
</feature>
<feature type="binding site" evidence="2">
    <location>
        <position position="102"/>
    </location>
    <ligand>
        <name>Na(+)</name>
        <dbReference type="ChEBI" id="CHEBI:29101"/>
        <label>1</label>
    </ligand>
</feature>
<feature type="binding site" evidence="2">
    <location>
        <position position="330"/>
    </location>
    <ligand>
        <name>L-aspartate</name>
        <dbReference type="ChEBI" id="CHEBI:29991"/>
    </ligand>
</feature>
<feature type="binding site" evidence="2">
    <location>
        <position position="332"/>
    </location>
    <ligand>
        <name>L-aspartate</name>
        <dbReference type="ChEBI" id="CHEBI:29991"/>
    </ligand>
</feature>
<feature type="binding site" evidence="2">
    <location>
        <position position="361"/>
    </location>
    <ligand>
        <name>Na(+)</name>
        <dbReference type="ChEBI" id="CHEBI:29101"/>
        <label>1</label>
    </ligand>
</feature>
<feature type="binding site" evidence="2">
    <location>
        <position position="363"/>
    </location>
    <ligand>
        <name>Na(+)</name>
        <dbReference type="ChEBI" id="CHEBI:29101"/>
        <label>2</label>
    </ligand>
</feature>
<feature type="binding site" evidence="2">
    <location>
        <position position="365"/>
    </location>
    <ligand>
        <name>Na(+)</name>
        <dbReference type="ChEBI" id="CHEBI:29101"/>
        <label>1</label>
    </ligand>
</feature>
<feature type="binding site" evidence="2">
    <location>
        <position position="367"/>
    </location>
    <ligand>
        <name>Na(+)</name>
        <dbReference type="ChEBI" id="CHEBI:29101"/>
        <label>1</label>
    </ligand>
</feature>
<feature type="binding site" evidence="2">
    <location>
        <position position="369"/>
    </location>
    <ligand>
        <name>L-aspartate</name>
        <dbReference type="ChEBI" id="CHEBI:29991"/>
    </ligand>
</feature>
<feature type="binding site" evidence="2">
    <location>
        <position position="404"/>
    </location>
    <ligand>
        <name>Na(+)</name>
        <dbReference type="ChEBI" id="CHEBI:29101"/>
        <label>2</label>
    </ligand>
</feature>
<feature type="binding site" evidence="2">
    <location>
        <position position="405"/>
    </location>
    <ligand>
        <name>Na(+)</name>
        <dbReference type="ChEBI" id="CHEBI:29101"/>
        <label>2</label>
    </ligand>
</feature>
<feature type="binding site" evidence="2">
    <location>
        <position position="407"/>
    </location>
    <ligand>
        <name>Na(+)</name>
        <dbReference type="ChEBI" id="CHEBI:29101"/>
        <label>2</label>
    </ligand>
</feature>
<feature type="binding site" evidence="2">
    <location>
        <position position="410"/>
    </location>
    <ligand>
        <name>L-aspartate</name>
        <dbReference type="ChEBI" id="CHEBI:29991"/>
    </ligand>
</feature>
<feature type="binding site" evidence="2">
    <location>
        <position position="446"/>
    </location>
    <ligand>
        <name>L-aspartate</name>
        <dbReference type="ChEBI" id="CHEBI:29991"/>
    </ligand>
</feature>
<feature type="binding site" evidence="2">
    <location>
        <position position="447"/>
    </location>
    <ligand>
        <name>L-aspartate</name>
        <dbReference type="ChEBI" id="CHEBI:29991"/>
    </ligand>
</feature>
<feature type="binding site" evidence="2">
    <location>
        <position position="450"/>
    </location>
    <ligand>
        <name>L-aspartate</name>
        <dbReference type="ChEBI" id="CHEBI:29991"/>
    </ligand>
</feature>
<feature type="binding site" evidence="2">
    <location>
        <position position="450"/>
    </location>
    <ligand>
        <name>Na(+)</name>
        <dbReference type="ChEBI" id="CHEBI:29101"/>
        <label>1</label>
    </ligand>
</feature>
<feature type="binding site" evidence="2">
    <location>
        <position position="454"/>
    </location>
    <ligand>
        <name>Na(+)</name>
        <dbReference type="ChEBI" id="CHEBI:29101"/>
        <label>1</label>
    </ligand>
</feature>
<feature type="modified residue" description="Phosphoserine" evidence="13">
    <location>
        <position position="516"/>
    </location>
</feature>
<feature type="modified residue" description="Phosphoserine" evidence="13">
    <location>
        <position position="521"/>
    </location>
</feature>
<feature type="glycosylation site" description="N-linked (GlcNAc...) asparagine" evidence="4">
    <location>
        <position position="128"/>
    </location>
</feature>
<feature type="glycosylation site" description="N-linked (GlcNAc...) asparagine" evidence="4">
    <location>
        <position position="178"/>
    </location>
</feature>
<feature type="glycosylation site" description="N-linked (GlcNAc...) asparagine" evidence="4">
    <location>
        <position position="194"/>
    </location>
</feature>
<feature type="sequence conflict" description="In Ref. 2; AAB71742." evidence="12" ref="2">
    <original>T</original>
    <variation>A</variation>
    <location>
        <position position="121"/>
    </location>
</feature>
<feature type="sequence conflict" description="In Ref. 1; BAA07855." evidence="12" ref="1">
    <original>M</original>
    <variation>I</variation>
    <location>
        <position position="139"/>
    </location>
</feature>
<sequence length="523" mass="56694">MGKPTSSGCDWRRFLRNHWLLLSTVAAVVLGIVLGVVVRGHSELSNLDKFYFAFPGEILMRMLKLVILPLIVSSMITGVAALDSNVSGKIGLRAVVYYFSTTVIAVILGIVLVVSIKPGVTQKVNDINRTGKTPEVSTMDAMLDLIRNMFPENLVQACFQQYKTKREEVKPVGDPGGNATEVSVTTAMTTMSENKTKEYKIVGLYSDGINVLGLIIFCLVFGLVIGKMGEKGQILVDFFNALSDATMKIVQIIMCYMPIGILFLIAGKIIEVEDWEIFRKLGLYMATVLSGLAIHSLIVLPLLYFIVVRKNPFRFALGMAQALLTALMISSSSATLPVTFRCAEEKNQVDKRITRFVLPVGATINMDGTALYEAVAAVFIAQLNGLDLSIGQIVTISITATAASIGAAGVPQAGLVTMVIVLSAVGLPAEDVTLIIAVDWLLDRFRTMVNVLGDAFGTGIVEKLSKKELEQMDVSSEVNIVNPFALEPTTLDNEDSDTKKSYVNGGFAVDKSDTISFTQTSQF</sequence>
<evidence type="ECO:0000250" key="1">
    <source>
        <dbReference type="UniProtKB" id="P43003"/>
    </source>
</evidence>
<evidence type="ECO:0000250" key="2">
    <source>
        <dbReference type="UniProtKB" id="P43005"/>
    </source>
</evidence>
<evidence type="ECO:0000250" key="3">
    <source>
        <dbReference type="UniProtKB" id="P51907"/>
    </source>
</evidence>
<evidence type="ECO:0000255" key="4"/>
<evidence type="ECO:0000269" key="5">
    <source>
    </source>
</evidence>
<evidence type="ECO:0000269" key="6">
    <source>
    </source>
</evidence>
<evidence type="ECO:0000269" key="7">
    <source>
    </source>
</evidence>
<evidence type="ECO:0000269" key="8">
    <source>
    </source>
</evidence>
<evidence type="ECO:0000269" key="9">
    <source>
    </source>
</evidence>
<evidence type="ECO:0000269" key="10">
    <source>
    </source>
</evidence>
<evidence type="ECO:0000303" key="11">
    <source>
    </source>
</evidence>
<evidence type="ECO:0000305" key="12"/>
<evidence type="ECO:0007744" key="13">
    <source>
    </source>
</evidence>
<reference key="1">
    <citation type="journal article" date="1995" name="Biochim. Biophys. Acta">
        <title>Molecular cloning of two glutamate transporter subtypes from mouse brain.</title>
        <authorList>
            <person name="Mukainaka Y."/>
            <person name="Tanaka K."/>
            <person name="Hagiwara T."/>
            <person name="Wada K."/>
        </authorList>
    </citation>
    <scope>NUCLEOTIDE SEQUENCE [MRNA]</scope>
    <scope>TISSUE SPECIFICITY</scope>
    <source>
        <strain>JCL:ICR</strain>
        <tissue>Cerebellum</tissue>
    </source>
</reference>
<reference key="2">
    <citation type="submission" date="1997-10" db="EMBL/GenBank/DDBJ databases">
        <title>Molecular cloning of a mouse glutamate transporter.</title>
        <authorList>
            <person name="Peng J.-B."/>
            <person name="Guo L.-H."/>
        </authorList>
    </citation>
    <scope>NUCLEOTIDE SEQUENCE [GENOMIC DNA / MRNA]</scope>
    <source>
        <tissue>Brain</tissue>
    </source>
</reference>
<reference key="3">
    <citation type="submission" date="2005-07" db="EMBL/GenBank/DDBJ databases">
        <authorList>
            <person name="Mural R.J."/>
            <person name="Adams M.D."/>
            <person name="Myers E.W."/>
            <person name="Smith H.O."/>
            <person name="Venter J.C."/>
        </authorList>
    </citation>
    <scope>NUCLEOTIDE SEQUENCE [LARGE SCALE GENOMIC DNA]</scope>
</reference>
<reference key="4">
    <citation type="journal article" date="2004" name="Genome Res.">
        <title>The status, quality, and expansion of the NIH full-length cDNA project: the Mammalian Gene Collection (MGC).</title>
        <authorList>
            <consortium name="The MGC Project Team"/>
        </authorList>
    </citation>
    <scope>NUCLEOTIDE SEQUENCE [LARGE SCALE MRNA]</scope>
    <source>
        <strain>C57BL/6J</strain>
        <tissue>Brain</tissue>
    </source>
</reference>
<reference key="5">
    <citation type="journal article" date="1997" name="EMBO J.">
        <title>Glutamate transporter EAAC-1-deficient mice develop dicarboxylic aminoaciduria and behavioral abnormalities but no neurodegeneration.</title>
        <authorList>
            <person name="Peghini P."/>
            <person name="Janzen J."/>
            <person name="Stoffel W."/>
        </authorList>
    </citation>
    <scope>DISRUPTION PHENOTYPE</scope>
    <scope>FUNCTION</scope>
    <scope>SUBCELLULAR LOCATION</scope>
    <scope>TISSUE SPECIFICITY</scope>
</reference>
<reference key="6">
    <citation type="journal article" date="2002" name="Gene">
        <title>Molecular cloning, gene structure, expression profile and functional characterization of the mouse glutamate transporter (EAAT3) interacting protein GTRAP3-18.</title>
        <authorList>
            <person name="Butchbach M.E.R."/>
            <person name="Lai L."/>
            <person name="Lin C.-L.G."/>
        </authorList>
    </citation>
    <scope>FUNCTION</scope>
    <scope>SUBCELLULAR LOCATION</scope>
    <scope>INTERACTION WITH ARL6IP5</scope>
    <source>
        <strain>C57BL/6J</strain>
        <tissue>Brain</tissue>
    </source>
</reference>
<reference key="7">
    <citation type="journal article" date="2008" name="J. Biol. Chem.">
        <title>Modulation of the neural glutamate transporter EAAC1 by the addicsin-interacting protein ARL6IP1.</title>
        <authorList>
            <person name="Akiduki S."/>
            <person name="Ikemoto M.J."/>
        </authorList>
    </citation>
    <scope>INTERACTION WITH ARL6IP5</scope>
    <scope>FUNCTION</scope>
    <scope>SUBCELLULAR LOCATION</scope>
</reference>
<reference key="8">
    <citation type="journal article" date="2010" name="Cell">
        <title>A tissue-specific atlas of mouse protein phosphorylation and expression.</title>
        <authorList>
            <person name="Huttlin E.L."/>
            <person name="Jedrychowski M.P."/>
            <person name="Elias J.E."/>
            <person name="Goswami T."/>
            <person name="Rad R."/>
            <person name="Beausoleil S.A."/>
            <person name="Villen J."/>
            <person name="Haas W."/>
            <person name="Sowa M.E."/>
            <person name="Gygi S.P."/>
        </authorList>
    </citation>
    <scope>PHOSPHORYLATION [LARGE SCALE ANALYSIS] AT SER-516 AND SER-521</scope>
    <scope>IDENTIFICATION BY MASS SPECTROMETRY [LARGE SCALE ANALYSIS]</scope>
    <source>
        <tissue>Brain</tissue>
        <tissue>Kidney</tissue>
    </source>
</reference>
<reference key="9">
    <citation type="journal article" date="2016" name="Proc. Natl. Acad. Sci. U.S.A.">
        <title>Novel cystine transporter in renal proximal tubule identified as a missing partner of cystinuria-related plasma membrane protein rBAT/SLC3A1.</title>
        <authorList>
            <person name="Nagamori S."/>
            <person name="Wiriyasermkul P."/>
            <person name="Guarch M.E."/>
            <person name="Okuyama H."/>
            <person name="Nakagomi S."/>
            <person name="Tadagaki K."/>
            <person name="Nishinaka Y."/>
            <person name="Bodoy S."/>
            <person name="Takafuji K."/>
            <person name="Okuda S."/>
            <person name="Kurokawa J."/>
            <person name="Ohgaki R."/>
            <person name="Nunes V."/>
            <person name="Palacin M."/>
            <person name="Kanai Y."/>
        </authorList>
    </citation>
    <scope>SUBCELLULAR LOCATION</scope>
    <scope>TISSUE SPECIFICITY</scope>
</reference>
<reference key="10">
    <citation type="journal article" date="2019" name="Cell Rep.">
        <title>SorCS2 Controls Functional Expression of Amino Acid Transporter EAAT3 and Protects Neurons from Oxidative Stress and Epilepsy-Induced Pathology.</title>
        <authorList>
            <person name="Malik A.R."/>
            <person name="Szydlowska K."/>
            <person name="Nizinska K."/>
            <person name="Asaro A."/>
            <person name="van Vliet E.A."/>
            <person name="Popp O."/>
            <person name="Dittmar G."/>
            <person name="Fritsche-Guenther R."/>
            <person name="Kirwan J.A."/>
            <person name="Nykjaer A."/>
            <person name="Lukasiuk K."/>
            <person name="Aronica E."/>
            <person name="Willnow T.E."/>
        </authorList>
    </citation>
    <scope>FUNCTION</scope>
    <scope>TRANSPORTER ACTIVITY</scope>
    <scope>INTERACTION WITH SORCS2</scope>
    <scope>SUBCELLULAR LOCATION</scope>
    <scope>TISSUE SPECIFICITY</scope>
</reference>
<name>EAA3_MOUSE</name>
<keyword id="KW-0029">Amino-acid transport</keyword>
<keyword id="KW-1003">Cell membrane</keyword>
<keyword id="KW-0868">Chloride</keyword>
<keyword id="KW-0967">Endosome</keyword>
<keyword id="KW-0325">Glycoprotein</keyword>
<keyword id="KW-0472">Membrane</keyword>
<keyword id="KW-0479">Metal-binding</keyword>
<keyword id="KW-0597">Phosphoprotein</keyword>
<keyword id="KW-0630">Potassium</keyword>
<keyword id="KW-1185">Reference proteome</keyword>
<keyword id="KW-0915">Sodium</keyword>
<keyword id="KW-0769">Symport</keyword>
<keyword id="KW-0770">Synapse</keyword>
<keyword id="KW-0771">Synaptosome</keyword>
<keyword id="KW-0812">Transmembrane</keyword>
<keyword id="KW-1133">Transmembrane helix</keyword>
<keyword id="KW-0813">Transport</keyword>
<proteinExistence type="evidence at protein level"/>
<organism>
    <name type="scientific">Mus musculus</name>
    <name type="common">Mouse</name>
    <dbReference type="NCBI Taxonomy" id="10090"/>
    <lineage>
        <taxon>Eukaryota</taxon>
        <taxon>Metazoa</taxon>
        <taxon>Chordata</taxon>
        <taxon>Craniata</taxon>
        <taxon>Vertebrata</taxon>
        <taxon>Euteleostomi</taxon>
        <taxon>Mammalia</taxon>
        <taxon>Eutheria</taxon>
        <taxon>Euarchontoglires</taxon>
        <taxon>Glires</taxon>
        <taxon>Rodentia</taxon>
        <taxon>Myomorpha</taxon>
        <taxon>Muroidea</taxon>
        <taxon>Muridae</taxon>
        <taxon>Murinae</taxon>
        <taxon>Mus</taxon>
        <taxon>Mus</taxon>
    </lineage>
</organism>
<dbReference type="EMBL" id="D43797">
    <property type="protein sequence ID" value="BAA07855.1"/>
    <property type="molecule type" value="mRNA"/>
</dbReference>
<dbReference type="EMBL" id="U73521">
    <property type="protein sequence ID" value="AAB80694.1"/>
    <property type="molecule type" value="mRNA"/>
</dbReference>
<dbReference type="EMBL" id="U75217">
    <property type="protein sequence ID" value="AAB71742.1"/>
    <property type="molecule type" value="Genomic_DNA"/>
</dbReference>
<dbReference type="EMBL" id="CH466534">
    <property type="protein sequence ID" value="EDL41660.1"/>
    <property type="molecule type" value="Genomic_DNA"/>
</dbReference>
<dbReference type="EMBL" id="BC065099">
    <property type="protein sequence ID" value="AAH65099.1"/>
    <property type="molecule type" value="mRNA"/>
</dbReference>
<dbReference type="CCDS" id="CCDS29727.1"/>
<dbReference type="PIR" id="S55677">
    <property type="entry name" value="S55677"/>
</dbReference>
<dbReference type="RefSeq" id="NP_033225.1">
    <property type="nucleotide sequence ID" value="NM_009199.3"/>
</dbReference>
<dbReference type="SMR" id="P51906"/>
<dbReference type="BioGRID" id="203289">
    <property type="interactions" value="2"/>
</dbReference>
<dbReference type="FunCoup" id="P51906">
    <property type="interactions" value="353"/>
</dbReference>
<dbReference type="IntAct" id="P51906">
    <property type="interactions" value="1"/>
</dbReference>
<dbReference type="MINT" id="P51906"/>
<dbReference type="STRING" id="10090.ENSMUSP00000025875"/>
<dbReference type="GlyCosmos" id="P51906">
    <property type="glycosylation" value="3 sites, No reported glycans"/>
</dbReference>
<dbReference type="GlyGen" id="P51906">
    <property type="glycosylation" value="4 sites, 1 N-linked glycan (2 sites), 1 O-linked glycan (1 site)"/>
</dbReference>
<dbReference type="iPTMnet" id="P51906"/>
<dbReference type="PhosphoSitePlus" id="P51906"/>
<dbReference type="jPOST" id="P51906"/>
<dbReference type="PaxDb" id="10090-ENSMUSP00000025875"/>
<dbReference type="PeptideAtlas" id="P51906"/>
<dbReference type="ProteomicsDB" id="277794"/>
<dbReference type="ABCD" id="P51906">
    <property type="antibodies" value="1 sequenced antibody"/>
</dbReference>
<dbReference type="Antibodypedia" id="3650">
    <property type="antibodies" value="358 antibodies from 37 providers"/>
</dbReference>
<dbReference type="DNASU" id="20510"/>
<dbReference type="Ensembl" id="ENSMUST00000025875.5">
    <property type="protein sequence ID" value="ENSMUSP00000025875.5"/>
    <property type="gene ID" value="ENSMUSG00000024935.12"/>
</dbReference>
<dbReference type="GeneID" id="20510"/>
<dbReference type="KEGG" id="mmu:20510"/>
<dbReference type="UCSC" id="uc008hcl.1">
    <property type="organism name" value="mouse"/>
</dbReference>
<dbReference type="AGR" id="MGI:105083"/>
<dbReference type="CTD" id="6505"/>
<dbReference type="MGI" id="MGI:105083">
    <property type="gene designation" value="Slc1a1"/>
</dbReference>
<dbReference type="VEuPathDB" id="HostDB:ENSMUSG00000024935"/>
<dbReference type="eggNOG" id="KOG3787">
    <property type="taxonomic scope" value="Eukaryota"/>
</dbReference>
<dbReference type="GeneTree" id="ENSGT00940000155397"/>
<dbReference type="HOGENOM" id="CLU_019375_3_2_1"/>
<dbReference type="InParanoid" id="P51906"/>
<dbReference type="OMA" id="ICSFVVP"/>
<dbReference type="OrthoDB" id="5877963at2759"/>
<dbReference type="PhylomeDB" id="P51906"/>
<dbReference type="TreeFam" id="TF315206"/>
<dbReference type="Reactome" id="R-MMU-210500">
    <property type="pathway name" value="Glutamate Neurotransmitter Release Cycle"/>
</dbReference>
<dbReference type="Reactome" id="R-MMU-425393">
    <property type="pathway name" value="Transport of inorganic cations/anions and amino acids/oligopeptides"/>
</dbReference>
<dbReference type="BioGRID-ORCS" id="20510">
    <property type="hits" value="1 hit in 77 CRISPR screens"/>
</dbReference>
<dbReference type="ChiTaRS" id="Slc1a1">
    <property type="organism name" value="mouse"/>
</dbReference>
<dbReference type="PRO" id="PR:P51906"/>
<dbReference type="Proteomes" id="UP000000589">
    <property type="component" value="Chromosome 19"/>
</dbReference>
<dbReference type="RNAct" id="P51906">
    <property type="molecule type" value="protein"/>
</dbReference>
<dbReference type="Bgee" id="ENSMUSG00000024935">
    <property type="expression patterns" value="Expressed in pigmented layer of retina and 173 other cell types or tissues"/>
</dbReference>
<dbReference type="GO" id="GO:0016324">
    <property type="term" value="C:apical plasma membrane"/>
    <property type="evidence" value="ECO:0000314"/>
    <property type="project" value="MGI"/>
</dbReference>
<dbReference type="GO" id="GO:0009986">
    <property type="term" value="C:cell surface"/>
    <property type="evidence" value="ECO:0000314"/>
    <property type="project" value="MGI"/>
</dbReference>
<dbReference type="GO" id="GO:0005737">
    <property type="term" value="C:cytoplasm"/>
    <property type="evidence" value="ECO:0000314"/>
    <property type="project" value="MGI"/>
</dbReference>
<dbReference type="GO" id="GO:0030425">
    <property type="term" value="C:dendrite"/>
    <property type="evidence" value="ECO:0000314"/>
    <property type="project" value="MGI"/>
</dbReference>
<dbReference type="GO" id="GO:0031901">
    <property type="term" value="C:early endosome membrane"/>
    <property type="evidence" value="ECO:0000314"/>
    <property type="project" value="UniProtKB"/>
</dbReference>
<dbReference type="GO" id="GO:0031902">
    <property type="term" value="C:late endosome membrane"/>
    <property type="evidence" value="ECO:0007669"/>
    <property type="project" value="UniProtKB-SubCell"/>
</dbReference>
<dbReference type="GO" id="GO:0016020">
    <property type="term" value="C:membrane"/>
    <property type="evidence" value="ECO:0000314"/>
    <property type="project" value="MGI"/>
</dbReference>
<dbReference type="GO" id="GO:0045121">
    <property type="term" value="C:membrane raft"/>
    <property type="evidence" value="ECO:0000314"/>
    <property type="project" value="MGI"/>
</dbReference>
<dbReference type="GO" id="GO:0043025">
    <property type="term" value="C:neuronal cell body"/>
    <property type="evidence" value="ECO:0000314"/>
    <property type="project" value="MGI"/>
</dbReference>
<dbReference type="GO" id="GO:0005886">
    <property type="term" value="C:plasma membrane"/>
    <property type="evidence" value="ECO:0000314"/>
    <property type="project" value="UniProtKB"/>
</dbReference>
<dbReference type="GO" id="GO:0098794">
    <property type="term" value="C:postsynapse"/>
    <property type="evidence" value="ECO:0007669"/>
    <property type="project" value="GOC"/>
</dbReference>
<dbReference type="GO" id="GO:0055037">
    <property type="term" value="C:recycling endosome"/>
    <property type="evidence" value="ECO:0000314"/>
    <property type="project" value="MGI"/>
</dbReference>
<dbReference type="GO" id="GO:0055038">
    <property type="term" value="C:recycling endosome membrane"/>
    <property type="evidence" value="ECO:0000314"/>
    <property type="project" value="UniProtKB"/>
</dbReference>
<dbReference type="GO" id="GO:0098685">
    <property type="term" value="C:Schaffer collateral - CA1 synapse"/>
    <property type="evidence" value="ECO:0000314"/>
    <property type="project" value="SynGO"/>
</dbReference>
<dbReference type="GO" id="GO:0045202">
    <property type="term" value="C:synapse"/>
    <property type="evidence" value="ECO:0000314"/>
    <property type="project" value="MGI"/>
</dbReference>
<dbReference type="GO" id="GO:0031982">
    <property type="term" value="C:vesicle"/>
    <property type="evidence" value="ECO:0000314"/>
    <property type="project" value="MGI"/>
</dbReference>
<dbReference type="GO" id="GO:0015108">
    <property type="term" value="F:chloride transmembrane transporter activity"/>
    <property type="evidence" value="ECO:0000250"/>
    <property type="project" value="UniProtKB"/>
</dbReference>
<dbReference type="GO" id="GO:0033229">
    <property type="term" value="F:cysteine transmembrane transporter activity"/>
    <property type="evidence" value="ECO:0000314"/>
    <property type="project" value="UniProtKB"/>
</dbReference>
<dbReference type="GO" id="GO:0140010">
    <property type="term" value="F:D-aspartate transmembrane transporter activity"/>
    <property type="evidence" value="ECO:0007669"/>
    <property type="project" value="Ensembl"/>
</dbReference>
<dbReference type="GO" id="GO:0015501">
    <property type="term" value="F:glutamate:sodium symporter activity"/>
    <property type="evidence" value="ECO:0000314"/>
    <property type="project" value="MGI"/>
</dbReference>
<dbReference type="GO" id="GO:0005314">
    <property type="term" value="F:high-affinity L-glutamate transmembrane transporter activity"/>
    <property type="evidence" value="ECO:0000250"/>
    <property type="project" value="UniProtKB"/>
</dbReference>
<dbReference type="GO" id="GO:0042802">
    <property type="term" value="F:identical protein binding"/>
    <property type="evidence" value="ECO:0000353"/>
    <property type="project" value="MGI"/>
</dbReference>
<dbReference type="GO" id="GO:0015183">
    <property type="term" value="F:L-aspartate transmembrane transporter activity"/>
    <property type="evidence" value="ECO:0007669"/>
    <property type="project" value="Ensembl"/>
</dbReference>
<dbReference type="GO" id="GO:0005313">
    <property type="term" value="F:L-glutamate transmembrane transporter activity"/>
    <property type="evidence" value="ECO:0000314"/>
    <property type="project" value="MGI"/>
</dbReference>
<dbReference type="GO" id="GO:0046872">
    <property type="term" value="F:metal ion binding"/>
    <property type="evidence" value="ECO:0007669"/>
    <property type="project" value="UniProtKB-KW"/>
</dbReference>
<dbReference type="GO" id="GO:0005253">
    <property type="term" value="F:monoatomic anion channel activity"/>
    <property type="evidence" value="ECO:0000314"/>
    <property type="project" value="MGI"/>
</dbReference>
<dbReference type="GO" id="GO:0030534">
    <property type="term" value="P:adult behavior"/>
    <property type="evidence" value="ECO:0000315"/>
    <property type="project" value="MGI"/>
</dbReference>
<dbReference type="GO" id="GO:0001662">
    <property type="term" value="P:behavioral fear response"/>
    <property type="evidence" value="ECO:0000315"/>
    <property type="project" value="MGI"/>
</dbReference>
<dbReference type="GO" id="GO:0048514">
    <property type="term" value="P:blood vessel morphogenesis"/>
    <property type="evidence" value="ECO:0000315"/>
    <property type="project" value="ARUK-UCL"/>
</dbReference>
<dbReference type="GO" id="GO:0007420">
    <property type="term" value="P:brain development"/>
    <property type="evidence" value="ECO:0000315"/>
    <property type="project" value="MGI"/>
</dbReference>
<dbReference type="GO" id="GO:0071242">
    <property type="term" value="P:cellular response to ammonium ion"/>
    <property type="evidence" value="ECO:0000314"/>
    <property type="project" value="MGI"/>
</dbReference>
<dbReference type="GO" id="GO:1903926">
    <property type="term" value="P:cellular response to bisphenol A"/>
    <property type="evidence" value="ECO:0000314"/>
    <property type="project" value="MGI"/>
</dbReference>
<dbReference type="GO" id="GO:0071314">
    <property type="term" value="P:cellular response to cocaine"/>
    <property type="evidence" value="ECO:0000314"/>
    <property type="project" value="MGI"/>
</dbReference>
<dbReference type="GO" id="GO:0071288">
    <property type="term" value="P:cellular response to mercury ion"/>
    <property type="evidence" value="ECO:0000314"/>
    <property type="project" value="MGI"/>
</dbReference>
<dbReference type="GO" id="GO:0034599">
    <property type="term" value="P:cellular response to oxidative stress"/>
    <property type="evidence" value="ECO:0000315"/>
    <property type="project" value="MGI"/>
</dbReference>
<dbReference type="GO" id="GO:1902476">
    <property type="term" value="P:chloride transmembrane transport"/>
    <property type="evidence" value="ECO:0000250"/>
    <property type="project" value="UniProtKB"/>
</dbReference>
<dbReference type="GO" id="GO:1990708">
    <property type="term" value="P:conditioned place preference"/>
    <property type="evidence" value="ECO:0000315"/>
    <property type="project" value="MGI"/>
</dbReference>
<dbReference type="GO" id="GO:1903712">
    <property type="term" value="P:cysteine transmembrane transport"/>
    <property type="evidence" value="ECO:0000314"/>
    <property type="project" value="UniProtKB"/>
</dbReference>
<dbReference type="GO" id="GO:0042883">
    <property type="term" value="P:cysteine transport"/>
    <property type="evidence" value="ECO:0000250"/>
    <property type="project" value="UniProtKB"/>
</dbReference>
<dbReference type="GO" id="GO:0019221">
    <property type="term" value="P:cytokine-mediated signaling pathway"/>
    <property type="evidence" value="ECO:0000315"/>
    <property type="project" value="MGI"/>
</dbReference>
<dbReference type="GO" id="GO:0070779">
    <property type="term" value="P:D-aspartate import across plasma membrane"/>
    <property type="evidence" value="ECO:0007669"/>
    <property type="project" value="Ensembl"/>
</dbReference>
<dbReference type="GO" id="GO:0042417">
    <property type="term" value="P:dopamine metabolic process"/>
    <property type="evidence" value="ECO:0000315"/>
    <property type="project" value="MGI"/>
</dbReference>
<dbReference type="GO" id="GO:0045184">
    <property type="term" value="P:establishment of protein localization"/>
    <property type="evidence" value="ECO:0000315"/>
    <property type="project" value="MGI"/>
</dbReference>
<dbReference type="GO" id="GO:0007212">
    <property type="term" value="P:G protein-coupled dopamine receptor signaling pathway"/>
    <property type="evidence" value="ECO:0000315"/>
    <property type="project" value="MGI"/>
</dbReference>
<dbReference type="GO" id="GO:0010467">
    <property type="term" value="P:gene expression"/>
    <property type="evidence" value="ECO:0000315"/>
    <property type="project" value="MGI"/>
</dbReference>
<dbReference type="GO" id="GO:0007215">
    <property type="term" value="P:glutamate receptor signaling pathway"/>
    <property type="evidence" value="ECO:0000315"/>
    <property type="project" value="MGI"/>
</dbReference>
<dbReference type="GO" id="GO:0006750">
    <property type="term" value="P:glutathione biosynthetic process"/>
    <property type="evidence" value="ECO:0000314"/>
    <property type="project" value="MGI"/>
</dbReference>
<dbReference type="GO" id="GO:0006749">
    <property type="term" value="P:glutathione metabolic process"/>
    <property type="evidence" value="ECO:0000315"/>
    <property type="project" value="MGI"/>
</dbReference>
<dbReference type="GO" id="GO:0007625">
    <property type="term" value="P:grooming behavior"/>
    <property type="evidence" value="ECO:0000315"/>
    <property type="project" value="MGI"/>
</dbReference>
<dbReference type="GO" id="GO:0060047">
    <property type="term" value="P:heart contraction"/>
    <property type="evidence" value="ECO:0000315"/>
    <property type="project" value="MGI"/>
</dbReference>
<dbReference type="GO" id="GO:0090461">
    <property type="term" value="P:intracellular glutamate homeostasis"/>
    <property type="evidence" value="ECO:0000315"/>
    <property type="project" value="MGI"/>
</dbReference>
<dbReference type="GO" id="GO:0006882">
    <property type="term" value="P:intracellular zinc ion homeostasis"/>
    <property type="evidence" value="ECO:0000315"/>
    <property type="project" value="MGI"/>
</dbReference>
<dbReference type="GO" id="GO:0140009">
    <property type="term" value="P:L-aspartate import across plasma membrane"/>
    <property type="evidence" value="ECO:0000250"/>
    <property type="project" value="UniProtKB"/>
</dbReference>
<dbReference type="GO" id="GO:0098712">
    <property type="term" value="P:L-glutamate import across plasma membrane"/>
    <property type="evidence" value="ECO:0000314"/>
    <property type="project" value="MGI"/>
</dbReference>
<dbReference type="GO" id="GO:0015813">
    <property type="term" value="P:L-glutamate transmembrane transport"/>
    <property type="evidence" value="ECO:0000314"/>
    <property type="project" value="MGI"/>
</dbReference>
<dbReference type="GO" id="GO:0007611">
    <property type="term" value="P:learning or memory"/>
    <property type="evidence" value="ECO:0000315"/>
    <property type="project" value="MGI"/>
</dbReference>
<dbReference type="GO" id="GO:0007626">
    <property type="term" value="P:locomotory behavior"/>
    <property type="evidence" value="ECO:0000315"/>
    <property type="project" value="MGI"/>
</dbReference>
<dbReference type="GO" id="GO:0060291">
    <property type="term" value="P:long-term synaptic potentiation"/>
    <property type="evidence" value="ECO:0000315"/>
    <property type="project" value="MGI"/>
</dbReference>
<dbReference type="GO" id="GO:0035633">
    <property type="term" value="P:maintenance of blood-brain barrier"/>
    <property type="evidence" value="ECO:0000315"/>
    <property type="project" value="ARUK-UCL"/>
</dbReference>
<dbReference type="GO" id="GO:0007613">
    <property type="term" value="P:memory"/>
    <property type="evidence" value="ECO:0000315"/>
    <property type="project" value="MGI"/>
</dbReference>
<dbReference type="GO" id="GO:0061744">
    <property type="term" value="P:motor behavior"/>
    <property type="evidence" value="ECO:0000315"/>
    <property type="project" value="MGI"/>
</dbReference>
<dbReference type="GO" id="GO:0097049">
    <property type="term" value="P:motor neuron apoptotic process"/>
    <property type="evidence" value="ECO:0000314"/>
    <property type="project" value="MGI"/>
</dbReference>
<dbReference type="GO" id="GO:0043524">
    <property type="term" value="P:negative regulation of neuron apoptotic process"/>
    <property type="evidence" value="ECO:0000315"/>
    <property type="project" value="MGI"/>
</dbReference>
<dbReference type="GO" id="GO:0022008">
    <property type="term" value="P:neurogenesis"/>
    <property type="evidence" value="ECO:0000315"/>
    <property type="project" value="MGI"/>
</dbReference>
<dbReference type="GO" id="GO:0051402">
    <property type="term" value="P:neuron apoptotic process"/>
    <property type="evidence" value="ECO:0000315"/>
    <property type="project" value="MGI"/>
</dbReference>
<dbReference type="GO" id="GO:0098877">
    <property type="term" value="P:neurotransmitter receptor transport to plasma membrane"/>
    <property type="evidence" value="ECO:0000315"/>
    <property type="project" value="MGI"/>
</dbReference>
<dbReference type="GO" id="GO:0010460">
    <property type="term" value="P:positive regulation of heart rate"/>
    <property type="evidence" value="ECO:0000315"/>
    <property type="project" value="CACAO"/>
</dbReference>
<dbReference type="GO" id="GO:0099170">
    <property type="term" value="P:postsynaptic modulation of chemical synaptic transmission"/>
    <property type="evidence" value="ECO:0000314"/>
    <property type="project" value="SynGO"/>
</dbReference>
<dbReference type="GO" id="GO:0002027">
    <property type="term" value="P:regulation of heart rate"/>
    <property type="evidence" value="ECO:0000315"/>
    <property type="project" value="MGI"/>
</dbReference>
<dbReference type="GO" id="GO:0090313">
    <property type="term" value="P:regulation of protein targeting to membrane"/>
    <property type="evidence" value="ECO:0000315"/>
    <property type="project" value="MGI"/>
</dbReference>
<dbReference type="GO" id="GO:0001975">
    <property type="term" value="P:response to amphetamine"/>
    <property type="evidence" value="ECO:0000315"/>
    <property type="project" value="MGI"/>
</dbReference>
<dbReference type="GO" id="GO:0072347">
    <property type="term" value="P:response to anesthetic"/>
    <property type="evidence" value="ECO:0000315"/>
    <property type="project" value="MGI"/>
</dbReference>
<dbReference type="GO" id="GO:0048678">
    <property type="term" value="P:response to axon injury"/>
    <property type="evidence" value="ECO:0000314"/>
    <property type="project" value="MGI"/>
</dbReference>
<dbReference type="GO" id="GO:0036293">
    <property type="term" value="P:response to decreased oxygen levels"/>
    <property type="evidence" value="ECO:0000315"/>
    <property type="project" value="MGI"/>
</dbReference>
<dbReference type="GO" id="GO:0043278">
    <property type="term" value="P:response to morphine"/>
    <property type="evidence" value="ECO:0000314"/>
    <property type="project" value="MGI"/>
</dbReference>
<dbReference type="GO" id="GO:0009410">
    <property type="term" value="P:response to xenobiotic stimulus"/>
    <property type="evidence" value="ECO:0000315"/>
    <property type="project" value="MGI"/>
</dbReference>
<dbReference type="GO" id="GO:0060041">
    <property type="term" value="P:retina development in camera-type eye"/>
    <property type="evidence" value="ECO:0000315"/>
    <property type="project" value="MGI"/>
</dbReference>
<dbReference type="GO" id="GO:0010842">
    <property type="term" value="P:retina layer formation"/>
    <property type="evidence" value="ECO:0000315"/>
    <property type="project" value="MGI"/>
</dbReference>
<dbReference type="GO" id="GO:0060013">
    <property type="term" value="P:righting reflex"/>
    <property type="evidence" value="ECO:0000315"/>
    <property type="project" value="MGI"/>
</dbReference>
<dbReference type="GO" id="GO:0006801">
    <property type="term" value="P:superoxide metabolic process"/>
    <property type="evidence" value="ECO:0000315"/>
    <property type="project" value="MGI"/>
</dbReference>
<dbReference type="GO" id="GO:0050808">
    <property type="term" value="P:synapse organization"/>
    <property type="evidence" value="ECO:0000315"/>
    <property type="project" value="MGI"/>
</dbReference>
<dbReference type="GO" id="GO:0071577">
    <property type="term" value="P:zinc ion transmembrane transport"/>
    <property type="evidence" value="ECO:0000315"/>
    <property type="project" value="MGI"/>
</dbReference>
<dbReference type="FunFam" id="1.10.3860.10:FF:000002">
    <property type="entry name" value="Amino acid transporter"/>
    <property type="match status" value="1"/>
</dbReference>
<dbReference type="Gene3D" id="1.10.3860.10">
    <property type="entry name" value="Sodium:dicarboxylate symporter"/>
    <property type="match status" value="1"/>
</dbReference>
<dbReference type="InterPro" id="IPR050746">
    <property type="entry name" value="DAACS"/>
</dbReference>
<dbReference type="InterPro" id="IPR001991">
    <property type="entry name" value="Na-dicarboxylate_symporter"/>
</dbReference>
<dbReference type="InterPro" id="IPR018107">
    <property type="entry name" value="Na-dicarboxylate_symporter_CS"/>
</dbReference>
<dbReference type="InterPro" id="IPR036458">
    <property type="entry name" value="Na:dicarbo_symporter_sf"/>
</dbReference>
<dbReference type="PANTHER" id="PTHR11958:SF109">
    <property type="entry name" value="EXCITATORY AMINO ACID TRANSPORTER 3"/>
    <property type="match status" value="1"/>
</dbReference>
<dbReference type="PANTHER" id="PTHR11958">
    <property type="entry name" value="SODIUM/DICARBOXYLATE SYMPORTER-RELATED"/>
    <property type="match status" value="1"/>
</dbReference>
<dbReference type="Pfam" id="PF00375">
    <property type="entry name" value="SDF"/>
    <property type="match status" value="1"/>
</dbReference>
<dbReference type="PRINTS" id="PR00173">
    <property type="entry name" value="EDTRNSPORT"/>
</dbReference>
<dbReference type="SUPFAM" id="SSF118215">
    <property type="entry name" value="Proton glutamate symport protein"/>
    <property type="match status" value="1"/>
</dbReference>
<dbReference type="PROSITE" id="PS00713">
    <property type="entry name" value="NA_DICARBOXYL_SYMP_1"/>
    <property type="match status" value="1"/>
</dbReference>
<dbReference type="PROSITE" id="PS00714">
    <property type="entry name" value="NA_DICARBOXYL_SYMP_2"/>
    <property type="match status" value="1"/>
</dbReference>
<protein>
    <recommendedName>
        <fullName>Excitatory amino acid transporter 3</fullName>
    </recommendedName>
    <alternativeName>
        <fullName evidence="11">Excitatory amino-acid carrier 1</fullName>
    </alternativeName>
    <alternativeName>
        <fullName>Sodium-dependent glutamate/aspartate transporter 3</fullName>
    </alternativeName>
    <alternativeName>
        <fullName>Solute carrier family 1 member 1</fullName>
    </alternativeName>
</protein>
<comment type="function">
    <text evidence="2 5 6 8 10">Sodium-dependent, high-affinity amino acid transporter that mediates the uptake of L-glutamate and also L-aspartate and D-aspartate (PubMed:12119102, PubMed:18684713). Can also transport L-cysteine (PubMed:30840898). Functions as a symporter that transports one amino acid molecule together with two or three Na(+) ions and one proton, in parallel with the counter-transport of one K(+) ion. Mediates Cl(-) flux that is not coupled to amino acid transport; this avoids the accumulation of negative charges due to aspartate and Na(+) symport (By similarity). Plays an important role in L-glutamate and L-aspartate reabsorption in renal tubuli (PubMed:9233792). Plays a redundant role in the rapid removal of released glutamate from the synaptic cleft, which is essential for terminating the postsynaptic action of glutamate (PubMed:9233792). Contributes to glutathione biosynthesis and protection against oxidative stress via its role in L-glutamate and L-cysteine transport (PubMed:30840898). Negatively regulated by ARL6IP5 (PubMed:12119102).</text>
</comment>
<comment type="catalytic activity">
    <reaction evidence="2">
        <text>K(+)(in) + L-glutamate(out) + 3 Na(+)(out) + H(+)(out) = K(+)(out) + L-glutamate(in) + 3 Na(+)(in) + H(+)(in)</text>
        <dbReference type="Rhea" id="RHEA:70699"/>
        <dbReference type="ChEBI" id="CHEBI:15378"/>
        <dbReference type="ChEBI" id="CHEBI:29101"/>
        <dbReference type="ChEBI" id="CHEBI:29103"/>
        <dbReference type="ChEBI" id="CHEBI:29985"/>
    </reaction>
</comment>
<comment type="catalytic activity">
    <reaction evidence="2">
        <text>K(+)(in) + L-aspartate(out) + 3 Na(+)(out) + H(+)(out) = K(+)(out) + L-aspartate(in) + 3 Na(+)(in) + H(+)(in)</text>
        <dbReference type="Rhea" id="RHEA:70851"/>
        <dbReference type="ChEBI" id="CHEBI:15378"/>
        <dbReference type="ChEBI" id="CHEBI:29101"/>
        <dbReference type="ChEBI" id="CHEBI:29103"/>
        <dbReference type="ChEBI" id="CHEBI:29991"/>
    </reaction>
</comment>
<comment type="catalytic activity">
    <reaction evidence="2">
        <text>D-aspartate(out) + K(+)(in) + 3 Na(+)(out) + H(+)(out) = D-aspartate(in) + K(+)(out) + 3 Na(+)(in) + H(+)(in)</text>
        <dbReference type="Rhea" id="RHEA:71379"/>
        <dbReference type="ChEBI" id="CHEBI:15378"/>
        <dbReference type="ChEBI" id="CHEBI:29101"/>
        <dbReference type="ChEBI" id="CHEBI:29103"/>
        <dbReference type="ChEBI" id="CHEBI:29990"/>
    </reaction>
</comment>
<comment type="catalytic activity">
    <reaction evidence="8">
        <text>K(+)(in) + L-cysteine(out) + 3 Na(+)(out) + H(+)(out) = K(+)(out) + L-cysteine(in) + 3 Na(+)(in) + H(+)(in)</text>
        <dbReference type="Rhea" id="RHEA:82559"/>
        <dbReference type="ChEBI" id="CHEBI:15378"/>
        <dbReference type="ChEBI" id="CHEBI:29101"/>
        <dbReference type="ChEBI" id="CHEBI:29103"/>
        <dbReference type="ChEBI" id="CHEBI:35235"/>
    </reaction>
</comment>
<comment type="subunit">
    <text evidence="3 5 6 8 12">Homotrimer (Probable). Interacts with ARL6IP5 (PubMed:12119102, PubMed:18684713). Interacts with RTN2 (via N-terminus); the interaction promotes cell surface expression of SLC1A1 (By similarity). Interacts with SORCS2; this interaction is important for normal expression at the cell membrane (PubMed:30840898).</text>
</comment>
<comment type="interaction">
    <interactant intactId="EBI-8580001">
        <id>P51906</id>
    </interactant>
    <interactant intactId="EBI-8579982">
        <id>P53702</id>
        <label>Hccs</label>
    </interactant>
    <organismsDiffer>false</organismsDiffer>
    <experiments>5</experiments>
</comment>
<comment type="subcellular location">
    <subcellularLocation>
        <location evidence="5 6 8 10">Cell membrane</location>
        <topology evidence="1">Multi-pass membrane protein</topology>
    </subcellularLocation>
    <subcellularLocation>
        <location evidence="7">Apical cell membrane</location>
        <topology evidence="1">Multi-pass membrane protein</topology>
    </subcellularLocation>
    <subcellularLocation>
        <location evidence="8">Synapse</location>
        <location evidence="8">Synaptosome</location>
    </subcellularLocation>
    <subcellularLocation>
        <location evidence="8">Early endosome membrane</location>
    </subcellularLocation>
    <subcellularLocation>
        <location evidence="8">Late endosome membrane</location>
    </subcellularLocation>
    <subcellularLocation>
        <location evidence="8">Recycling endosome membrane</location>
    </subcellularLocation>
</comment>
<comment type="tissue specificity">
    <text evidence="7 8 9 10">Detected on neurons in the brain cortex, dentate gyrus and hippocampus CA2 region (at protein level) (PubMed:30840898). Expressed in whole brain, brain cortex, hippocampus, cerebellum, lung, kidney, small intestine and skeletal muscle (PubMed:30840898, PubMed:7766664, PubMed:9233792). Expressed in the renal outer medulla, medullary ray and cortex (at protein level) (PubMed:26739563).</text>
</comment>
<comment type="domain">
    <text evidence="1">Contains eight transmembrane regions plus two helical hairpins that dip into the membrane. These helical hairpin structures play an important role in the transport process. The first enters the membrane from the cytoplasmic side, the second one from the extracellular side. During the transport cycle, the regions involved in amino acid transport, and especially the helical hairpins, move vertically by about 15-18 Angstroms, alternating between exposure to the aqueous phase and reinsertion in the lipid bilayer. In contrast, the regions involved in trimerization do not move.</text>
</comment>
<comment type="disruption phenotype">
    <text evidence="10">No visible phenotype at birth. Mice are born at the expected Mendelian rate, are viable and fertile, and do not develop any neurological symptoms with increasing age. They show decreased spontaneous locomotor activity. Besides, urinary excretion of glutamate and aspartate are strongly increased, but glutamate and aspartate serum levels are normal.</text>
</comment>
<comment type="similarity">
    <text evidence="12">Belongs to the dicarboxylate/amino acid:cation symporter (DAACS) (TC 2.A.23) family. SLC1A1 subfamily.</text>
</comment>
<accession>P51906</accession>
<accession>O35869</accession>
<accession>O35875</accession>
<accession>Q6P1F7</accession>